<comment type="function">
    <text evidence="1">Could mediate folate transport.</text>
</comment>
<comment type="subcellular location">
    <subcellularLocation>
        <location evidence="4">Membrane</location>
        <topology evidence="4">Multi-pass membrane protein</topology>
    </subcellularLocation>
</comment>
<comment type="similarity">
    <text evidence="4">Belongs to the major facilitator superfamily. Folate-biopterin transporter (TC 2.A.71) family.</text>
</comment>
<comment type="sequence caution" evidence="4">
    <conflict type="erroneous gene model prediction">
        <sequence resource="EMBL-CDS" id="BAB08765"/>
    </conflict>
</comment>
<keyword id="KW-0472">Membrane</keyword>
<keyword id="KW-1185">Reference proteome</keyword>
<keyword id="KW-0812">Transmembrane</keyword>
<keyword id="KW-1133">Transmembrane helix</keyword>
<keyword id="KW-0813">Transport</keyword>
<organism>
    <name type="scientific">Arabidopsis thaliana</name>
    <name type="common">Mouse-ear cress</name>
    <dbReference type="NCBI Taxonomy" id="3702"/>
    <lineage>
        <taxon>Eukaryota</taxon>
        <taxon>Viridiplantae</taxon>
        <taxon>Streptophyta</taxon>
        <taxon>Embryophyta</taxon>
        <taxon>Tracheophyta</taxon>
        <taxon>Spermatophyta</taxon>
        <taxon>Magnoliopsida</taxon>
        <taxon>eudicotyledons</taxon>
        <taxon>Gunneridae</taxon>
        <taxon>Pentapetalae</taxon>
        <taxon>rosids</taxon>
        <taxon>malvids</taxon>
        <taxon>Brassicales</taxon>
        <taxon>Brassicaceae</taxon>
        <taxon>Camelineae</taxon>
        <taxon>Arabidopsis</taxon>
    </lineage>
</organism>
<proteinExistence type="evidence at transcript level"/>
<evidence type="ECO:0000250" key="1"/>
<evidence type="ECO:0000255" key="2"/>
<evidence type="ECO:0000256" key="3">
    <source>
        <dbReference type="SAM" id="MobiDB-lite"/>
    </source>
</evidence>
<evidence type="ECO:0000305" key="4"/>
<accession>Q8RWQ5</accession>
<accession>Q9FFU4</accession>
<gene>
    <name type="ordered locus">At5g54860</name>
    <name type="ORF">MBG8.12</name>
</gene>
<protein>
    <recommendedName>
        <fullName>Probable folate-biopterin transporter 4</fullName>
    </recommendedName>
</protein>
<dbReference type="EMBL" id="AB005232">
    <property type="protein sequence ID" value="BAB08765.1"/>
    <property type="status" value="ALT_SEQ"/>
    <property type="molecule type" value="Genomic_DNA"/>
</dbReference>
<dbReference type="EMBL" id="CP002688">
    <property type="protein sequence ID" value="AED96550.1"/>
    <property type="molecule type" value="Genomic_DNA"/>
</dbReference>
<dbReference type="EMBL" id="AY091775">
    <property type="protein sequence ID" value="AAM10323.1"/>
    <property type="molecule type" value="mRNA"/>
</dbReference>
<dbReference type="RefSeq" id="NP_200297.2">
    <property type="nucleotide sequence ID" value="NM_124868.5"/>
</dbReference>
<dbReference type="FunCoup" id="Q8RWQ5">
    <property type="interactions" value="41"/>
</dbReference>
<dbReference type="STRING" id="3702.Q8RWQ5"/>
<dbReference type="PaxDb" id="3702-AT5G54860.1"/>
<dbReference type="ProteomicsDB" id="230831"/>
<dbReference type="EnsemblPlants" id="AT5G54860.1">
    <property type="protein sequence ID" value="AT5G54860.1"/>
    <property type="gene ID" value="AT5G54860"/>
</dbReference>
<dbReference type="GeneID" id="835577"/>
<dbReference type="Gramene" id="AT5G54860.1">
    <property type="protein sequence ID" value="AT5G54860.1"/>
    <property type="gene ID" value="AT5G54860"/>
</dbReference>
<dbReference type="KEGG" id="ath:AT5G54860"/>
<dbReference type="Araport" id="AT5G54860"/>
<dbReference type="TAIR" id="AT5G54860"/>
<dbReference type="eggNOG" id="ENOG502QPYM">
    <property type="taxonomic scope" value="Eukaryota"/>
</dbReference>
<dbReference type="HOGENOM" id="CLU_018563_0_1_1"/>
<dbReference type="InParanoid" id="Q8RWQ5"/>
<dbReference type="OMA" id="SREYIFM"/>
<dbReference type="PhylomeDB" id="Q8RWQ5"/>
<dbReference type="PRO" id="PR:Q8RWQ5"/>
<dbReference type="Proteomes" id="UP000006548">
    <property type="component" value="Chromosome 5"/>
</dbReference>
<dbReference type="ExpressionAtlas" id="Q8RWQ5">
    <property type="expression patterns" value="baseline and differential"/>
</dbReference>
<dbReference type="GO" id="GO:0016020">
    <property type="term" value="C:membrane"/>
    <property type="evidence" value="ECO:0007669"/>
    <property type="project" value="UniProtKB-SubCell"/>
</dbReference>
<dbReference type="CDD" id="cd17484">
    <property type="entry name" value="MFS_FBT"/>
    <property type="match status" value="1"/>
</dbReference>
<dbReference type="Gene3D" id="1.20.1250.20">
    <property type="entry name" value="MFS general substrate transporter like domains"/>
    <property type="match status" value="1"/>
</dbReference>
<dbReference type="InterPro" id="IPR039309">
    <property type="entry name" value="BT1"/>
</dbReference>
<dbReference type="InterPro" id="IPR004324">
    <property type="entry name" value="FBT"/>
</dbReference>
<dbReference type="InterPro" id="IPR036259">
    <property type="entry name" value="MFS_trans_sf"/>
</dbReference>
<dbReference type="NCBIfam" id="TIGR00788">
    <property type="entry name" value="fbt"/>
    <property type="match status" value="1"/>
</dbReference>
<dbReference type="PANTHER" id="PTHR31585">
    <property type="entry name" value="FOLATE-BIOPTERIN TRANSPORTER 1, CHLOROPLASTIC"/>
    <property type="match status" value="1"/>
</dbReference>
<dbReference type="PANTHER" id="PTHR31585:SF7">
    <property type="entry name" value="FOLATE-BIOPTERIN TRANSPORTER 4-RELATED"/>
    <property type="match status" value="1"/>
</dbReference>
<dbReference type="Pfam" id="PF03092">
    <property type="entry name" value="BT1"/>
    <property type="match status" value="1"/>
</dbReference>
<dbReference type="SUPFAM" id="SSF103473">
    <property type="entry name" value="MFS general substrate transporter"/>
    <property type="match status" value="1"/>
</dbReference>
<reference key="1">
    <citation type="journal article" date="1997" name="DNA Res.">
        <title>Structural analysis of Arabidopsis thaliana chromosome 5. I. Sequence features of the 1.6 Mb regions covered by twenty physically assigned P1 clones.</title>
        <authorList>
            <person name="Sato S."/>
            <person name="Kotani H."/>
            <person name="Nakamura Y."/>
            <person name="Kaneko T."/>
            <person name="Asamizu E."/>
            <person name="Fukami M."/>
            <person name="Miyajima N."/>
            <person name="Tabata S."/>
        </authorList>
    </citation>
    <scope>NUCLEOTIDE SEQUENCE [LARGE SCALE GENOMIC DNA]</scope>
    <source>
        <strain>cv. Columbia</strain>
    </source>
</reference>
<reference key="2">
    <citation type="journal article" date="2017" name="Plant J.">
        <title>Araport11: a complete reannotation of the Arabidopsis thaliana reference genome.</title>
        <authorList>
            <person name="Cheng C.Y."/>
            <person name="Krishnakumar V."/>
            <person name="Chan A.P."/>
            <person name="Thibaud-Nissen F."/>
            <person name="Schobel S."/>
            <person name="Town C.D."/>
        </authorList>
    </citation>
    <scope>GENOME REANNOTATION</scope>
    <source>
        <strain>cv. Columbia</strain>
    </source>
</reference>
<reference key="3">
    <citation type="journal article" date="2003" name="Science">
        <title>Empirical analysis of transcriptional activity in the Arabidopsis genome.</title>
        <authorList>
            <person name="Yamada K."/>
            <person name="Lim J."/>
            <person name="Dale J.M."/>
            <person name="Chen H."/>
            <person name="Shinn P."/>
            <person name="Palm C.J."/>
            <person name="Southwick A.M."/>
            <person name="Wu H.C."/>
            <person name="Kim C.J."/>
            <person name="Nguyen M."/>
            <person name="Pham P.K."/>
            <person name="Cheuk R.F."/>
            <person name="Karlin-Newmann G."/>
            <person name="Liu S.X."/>
            <person name="Lam B."/>
            <person name="Sakano H."/>
            <person name="Wu T."/>
            <person name="Yu G."/>
            <person name="Miranda M."/>
            <person name="Quach H.L."/>
            <person name="Tripp M."/>
            <person name="Chang C.H."/>
            <person name="Lee J.M."/>
            <person name="Toriumi M.J."/>
            <person name="Chan M.M."/>
            <person name="Tang C.C."/>
            <person name="Onodera C.S."/>
            <person name="Deng J.M."/>
            <person name="Akiyama K."/>
            <person name="Ansari Y."/>
            <person name="Arakawa T."/>
            <person name="Banh J."/>
            <person name="Banno F."/>
            <person name="Bowser L."/>
            <person name="Brooks S.Y."/>
            <person name="Carninci P."/>
            <person name="Chao Q."/>
            <person name="Choy N."/>
            <person name="Enju A."/>
            <person name="Goldsmith A.D."/>
            <person name="Gurjal M."/>
            <person name="Hansen N.F."/>
            <person name="Hayashizaki Y."/>
            <person name="Johnson-Hopson C."/>
            <person name="Hsuan V.W."/>
            <person name="Iida K."/>
            <person name="Karnes M."/>
            <person name="Khan S."/>
            <person name="Koesema E."/>
            <person name="Ishida J."/>
            <person name="Jiang P.X."/>
            <person name="Jones T."/>
            <person name="Kawai J."/>
            <person name="Kamiya A."/>
            <person name="Meyers C."/>
            <person name="Nakajima M."/>
            <person name="Narusaka M."/>
            <person name="Seki M."/>
            <person name="Sakurai T."/>
            <person name="Satou M."/>
            <person name="Tamse R."/>
            <person name="Vaysberg M."/>
            <person name="Wallender E.K."/>
            <person name="Wong C."/>
            <person name="Yamamura Y."/>
            <person name="Yuan S."/>
            <person name="Shinozaki K."/>
            <person name="Davis R.W."/>
            <person name="Theologis A."/>
            <person name="Ecker J.R."/>
        </authorList>
    </citation>
    <scope>NUCLEOTIDE SEQUENCE [LARGE SCALE MRNA]</scope>
    <source>
        <strain>cv. Columbia</strain>
    </source>
</reference>
<reference key="4">
    <citation type="journal article" date="2005" name="J. Biol. Chem.">
        <title>Higher plant plastids and cyanobacteria have folate carriers related to those of trypanosomatids.</title>
        <authorList>
            <person name="Klaus S.M."/>
            <person name="Kunji E.R."/>
            <person name="Bozzo G.G."/>
            <person name="Noiriel A."/>
            <person name="de la Garza R.D."/>
            <person name="Basset G.J."/>
            <person name="Ravanel S."/>
            <person name="Rebeille F."/>
            <person name="Gregory J.F. III"/>
            <person name="Hanson A.D."/>
        </authorList>
    </citation>
    <scope>GENE FAMILY</scope>
</reference>
<name>FBT4_ARATH</name>
<sequence length="491" mass="53883">MIHWLKQLRSAFGVAFLWLVCLIYFTQGFRSFVWTAVSYQLKDRLQLSPSASQFVFSVAFFPWSIKPLYGIISDCIPIGGKKRTPYLVISTVLSLVPWLVLGLDSTSRSSSLYLMIFLTVQNLGSAMADVVIDAMIAEAVRLEKASFAGDLQSVSWFAMAVGGVCGSLLGGYALSNLKIETIFLLFTVLPALQLLSCALVEESPANNEPLPELLDSNEFEEKSLTSNDNYPDTSKSNTRRRKGQKKGKKGDSNGKSETQKKQSKSLASQWFQSLKAATFGLGRAFKQPIILRPMAWFFIAHITVPNLSTVMFYYQTEVLQLDAAFLGTARVVGWLGLMFGTFIYNRYLQDMTLRKSLLFAHIGLSVTILLDMVLVSRANVGYGVSDKTMVLFGSALGDAINQLKFMPFLILSGRLCPPGIEGTLFALFMSINNLGNTVGSFMGAGLASLLGISSGSFDNMFMGLAIQVFCTYIPVLFLFLIPKEATGVSAS</sequence>
<feature type="chain" id="PRO_0000420116" description="Probable folate-biopterin transporter 4">
    <location>
        <begin position="1"/>
        <end position="491"/>
    </location>
</feature>
<feature type="transmembrane region" description="Helical" evidence="2">
    <location>
        <begin position="14"/>
        <end position="34"/>
    </location>
</feature>
<feature type="transmembrane region" description="Helical" evidence="2">
    <location>
        <begin position="52"/>
        <end position="72"/>
    </location>
</feature>
<feature type="transmembrane region" description="Helical" evidence="2">
    <location>
        <begin position="84"/>
        <end position="104"/>
    </location>
</feature>
<feature type="transmembrane region" description="Helical" evidence="2">
    <location>
        <begin position="112"/>
        <end position="132"/>
    </location>
</feature>
<feature type="transmembrane region" description="Helical" evidence="2">
    <location>
        <begin position="154"/>
        <end position="174"/>
    </location>
</feature>
<feature type="transmembrane region" description="Helical" evidence="2">
    <location>
        <begin position="179"/>
        <end position="199"/>
    </location>
</feature>
<feature type="transmembrane region" description="Helical" evidence="2">
    <location>
        <begin position="294"/>
        <end position="314"/>
    </location>
</feature>
<feature type="transmembrane region" description="Helical" evidence="2">
    <location>
        <begin position="323"/>
        <end position="343"/>
    </location>
</feature>
<feature type="transmembrane region" description="Helical" evidence="2">
    <location>
        <begin position="356"/>
        <end position="376"/>
    </location>
</feature>
<feature type="transmembrane region" description="Helical" evidence="2">
    <location>
        <begin position="389"/>
        <end position="411"/>
    </location>
</feature>
<feature type="transmembrane region" description="Helical" evidence="2">
    <location>
        <begin position="437"/>
        <end position="457"/>
    </location>
</feature>
<feature type="transmembrane region" description="Helical" evidence="2">
    <location>
        <begin position="461"/>
        <end position="481"/>
    </location>
</feature>
<feature type="region of interest" description="Disordered" evidence="3">
    <location>
        <begin position="222"/>
        <end position="262"/>
    </location>
</feature>
<feature type="compositionally biased region" description="Polar residues" evidence="3">
    <location>
        <begin position="224"/>
        <end position="236"/>
    </location>
</feature>
<feature type="compositionally biased region" description="Basic residues" evidence="3">
    <location>
        <begin position="237"/>
        <end position="248"/>
    </location>
</feature>
<feature type="compositionally biased region" description="Basic and acidic residues" evidence="3">
    <location>
        <begin position="249"/>
        <end position="260"/>
    </location>
</feature>